<comment type="function">
    <text evidence="1">Forms part of the ribosomal stalk which helps the ribosome interact with GTP-bound translation factors.</text>
</comment>
<comment type="subunit">
    <text evidence="1">Part of the ribosomal stalk of the 50S ribosomal subunit. Interacts with L10 and the large rRNA to form the base of the stalk. L10 forms an elongated spine to which L12 dimers bind in a sequential fashion forming a multimeric L10(L12)X complex.</text>
</comment>
<comment type="PTM">
    <text evidence="1">One or more lysine residues are methylated.</text>
</comment>
<comment type="similarity">
    <text evidence="1">Belongs to the universal ribosomal protein uL11 family.</text>
</comment>
<feature type="chain" id="PRO_0000258175" description="Large ribosomal subunit protein uL11">
    <location>
        <begin position="1"/>
        <end position="142"/>
    </location>
</feature>
<dbReference type="EMBL" id="CP000319">
    <property type="protein sequence ID" value="ABE62349.1"/>
    <property type="molecule type" value="Genomic_DNA"/>
</dbReference>
<dbReference type="RefSeq" id="WP_011510038.1">
    <property type="nucleotide sequence ID" value="NC_007964.1"/>
</dbReference>
<dbReference type="SMR" id="Q1QN48"/>
<dbReference type="STRING" id="323097.Nham_1527"/>
<dbReference type="KEGG" id="nha:Nham_1527"/>
<dbReference type="eggNOG" id="COG0080">
    <property type="taxonomic scope" value="Bacteria"/>
</dbReference>
<dbReference type="HOGENOM" id="CLU_074237_2_1_5"/>
<dbReference type="OrthoDB" id="9802408at2"/>
<dbReference type="Proteomes" id="UP000001953">
    <property type="component" value="Chromosome"/>
</dbReference>
<dbReference type="GO" id="GO:0022625">
    <property type="term" value="C:cytosolic large ribosomal subunit"/>
    <property type="evidence" value="ECO:0007669"/>
    <property type="project" value="TreeGrafter"/>
</dbReference>
<dbReference type="GO" id="GO:0070180">
    <property type="term" value="F:large ribosomal subunit rRNA binding"/>
    <property type="evidence" value="ECO:0007669"/>
    <property type="project" value="UniProtKB-UniRule"/>
</dbReference>
<dbReference type="GO" id="GO:0003735">
    <property type="term" value="F:structural constituent of ribosome"/>
    <property type="evidence" value="ECO:0007669"/>
    <property type="project" value="InterPro"/>
</dbReference>
<dbReference type="GO" id="GO:0006412">
    <property type="term" value="P:translation"/>
    <property type="evidence" value="ECO:0007669"/>
    <property type="project" value="UniProtKB-UniRule"/>
</dbReference>
<dbReference type="CDD" id="cd00349">
    <property type="entry name" value="Ribosomal_L11"/>
    <property type="match status" value="1"/>
</dbReference>
<dbReference type="FunFam" id="1.10.10.250:FF:000001">
    <property type="entry name" value="50S ribosomal protein L11"/>
    <property type="match status" value="1"/>
</dbReference>
<dbReference type="FunFam" id="3.30.1550.10:FF:000001">
    <property type="entry name" value="50S ribosomal protein L11"/>
    <property type="match status" value="1"/>
</dbReference>
<dbReference type="Gene3D" id="1.10.10.250">
    <property type="entry name" value="Ribosomal protein L11, C-terminal domain"/>
    <property type="match status" value="1"/>
</dbReference>
<dbReference type="Gene3D" id="3.30.1550.10">
    <property type="entry name" value="Ribosomal protein L11/L12, N-terminal domain"/>
    <property type="match status" value="1"/>
</dbReference>
<dbReference type="HAMAP" id="MF_00736">
    <property type="entry name" value="Ribosomal_uL11"/>
    <property type="match status" value="1"/>
</dbReference>
<dbReference type="InterPro" id="IPR000911">
    <property type="entry name" value="Ribosomal_uL11"/>
</dbReference>
<dbReference type="InterPro" id="IPR006519">
    <property type="entry name" value="Ribosomal_uL11_bac-typ"/>
</dbReference>
<dbReference type="InterPro" id="IPR020783">
    <property type="entry name" value="Ribosomal_uL11_C"/>
</dbReference>
<dbReference type="InterPro" id="IPR036769">
    <property type="entry name" value="Ribosomal_uL11_C_sf"/>
</dbReference>
<dbReference type="InterPro" id="IPR020784">
    <property type="entry name" value="Ribosomal_uL11_N"/>
</dbReference>
<dbReference type="InterPro" id="IPR036796">
    <property type="entry name" value="Ribosomal_uL11_N_sf"/>
</dbReference>
<dbReference type="NCBIfam" id="TIGR01632">
    <property type="entry name" value="L11_bact"/>
    <property type="match status" value="1"/>
</dbReference>
<dbReference type="PANTHER" id="PTHR11661">
    <property type="entry name" value="60S RIBOSOMAL PROTEIN L12"/>
    <property type="match status" value="1"/>
</dbReference>
<dbReference type="PANTHER" id="PTHR11661:SF1">
    <property type="entry name" value="LARGE RIBOSOMAL SUBUNIT PROTEIN UL11M"/>
    <property type="match status" value="1"/>
</dbReference>
<dbReference type="Pfam" id="PF00298">
    <property type="entry name" value="Ribosomal_L11"/>
    <property type="match status" value="1"/>
</dbReference>
<dbReference type="Pfam" id="PF03946">
    <property type="entry name" value="Ribosomal_L11_N"/>
    <property type="match status" value="1"/>
</dbReference>
<dbReference type="SMART" id="SM00649">
    <property type="entry name" value="RL11"/>
    <property type="match status" value="1"/>
</dbReference>
<dbReference type="SUPFAM" id="SSF54747">
    <property type="entry name" value="Ribosomal L11/L12e N-terminal domain"/>
    <property type="match status" value="1"/>
</dbReference>
<dbReference type="SUPFAM" id="SSF46906">
    <property type="entry name" value="Ribosomal protein L11, C-terminal domain"/>
    <property type="match status" value="1"/>
</dbReference>
<reference key="1">
    <citation type="submission" date="2006-03" db="EMBL/GenBank/DDBJ databases">
        <title>Complete sequence of chromosome of Nitrobacter hamburgensis X14.</title>
        <authorList>
            <consortium name="US DOE Joint Genome Institute"/>
            <person name="Copeland A."/>
            <person name="Lucas S."/>
            <person name="Lapidus A."/>
            <person name="Barry K."/>
            <person name="Detter J.C."/>
            <person name="Glavina del Rio T."/>
            <person name="Hammon N."/>
            <person name="Israni S."/>
            <person name="Dalin E."/>
            <person name="Tice H."/>
            <person name="Pitluck S."/>
            <person name="Chain P."/>
            <person name="Malfatti S."/>
            <person name="Shin M."/>
            <person name="Vergez L."/>
            <person name="Schmutz J."/>
            <person name="Larimer F."/>
            <person name="Land M."/>
            <person name="Hauser L."/>
            <person name="Kyrpides N."/>
            <person name="Ivanova N."/>
            <person name="Ward B."/>
            <person name="Arp D."/>
            <person name="Klotz M."/>
            <person name="Stein L."/>
            <person name="O'Mullan G."/>
            <person name="Starkenburg S."/>
            <person name="Sayavedra L."/>
            <person name="Poret-Peterson A.T."/>
            <person name="Gentry M.E."/>
            <person name="Bruce D."/>
            <person name="Richardson P."/>
        </authorList>
    </citation>
    <scope>NUCLEOTIDE SEQUENCE [LARGE SCALE GENOMIC DNA]</scope>
    <source>
        <strain>DSM 10229 / NCIMB 13809 / X14</strain>
    </source>
</reference>
<gene>
    <name evidence="1" type="primary">rplK</name>
    <name type="ordered locus">Nham_1527</name>
</gene>
<name>RL11_NITHX</name>
<sequence>MAKKVTGYLKLQVPAGAANPSPPIGPALGQRGLNIMEFCKAFNAQTQKEEKNTPIPVVITIYADRSFTFEMKTPPMAYFLKQAAKIQSGSKAPGRDSAGQVTKAQVREIAEKKMKDLNCDTVEAAMSMVEGSARSMGLQVAE</sequence>
<protein>
    <recommendedName>
        <fullName evidence="1">Large ribosomal subunit protein uL11</fullName>
    </recommendedName>
    <alternativeName>
        <fullName evidence="2">50S ribosomal protein L11</fullName>
    </alternativeName>
</protein>
<evidence type="ECO:0000255" key="1">
    <source>
        <dbReference type="HAMAP-Rule" id="MF_00736"/>
    </source>
</evidence>
<evidence type="ECO:0000305" key="2"/>
<proteinExistence type="inferred from homology"/>
<keyword id="KW-0488">Methylation</keyword>
<keyword id="KW-1185">Reference proteome</keyword>
<keyword id="KW-0687">Ribonucleoprotein</keyword>
<keyword id="KW-0689">Ribosomal protein</keyword>
<keyword id="KW-0694">RNA-binding</keyword>
<keyword id="KW-0699">rRNA-binding</keyword>
<organism>
    <name type="scientific">Nitrobacter hamburgensis (strain DSM 10229 / NCIMB 13809 / X14)</name>
    <dbReference type="NCBI Taxonomy" id="323097"/>
    <lineage>
        <taxon>Bacteria</taxon>
        <taxon>Pseudomonadati</taxon>
        <taxon>Pseudomonadota</taxon>
        <taxon>Alphaproteobacteria</taxon>
        <taxon>Hyphomicrobiales</taxon>
        <taxon>Nitrobacteraceae</taxon>
        <taxon>Nitrobacter</taxon>
    </lineage>
</organism>
<accession>Q1QN48</accession>